<keyword id="KW-0007">Acetylation</keyword>
<keyword id="KW-0150">Chloroplast</keyword>
<keyword id="KW-0934">Plastid</keyword>
<keyword id="KW-1185">Reference proteome</keyword>
<keyword id="KW-0809">Transit peptide</keyword>
<accession>Q9ZUU2</accession>
<accession>Q94A62</accession>
<sequence>MAIALSSSSTITSITLQPKLKTIHGLGTVLPGYSVKSHFRSVSLRRSAVVVSAITGASSGAGIGKGTADSLDTVKVLDLRGNEIPISDLWKDRKAVVAFARHFGCVLCRKRAAYLAEKKDVMDASGVALVLIGPGSIDQANTFVEQTKFKGEVYADPNHASYEALEFVSGVSVTFTPKAAMKILESYMEGYRQDWKLSFMKDTVERGGWQQGGILVAGPGKDNISYIRKDKEAGDDPPVEEILKACCA</sequence>
<comment type="subcellular location">
    <subcellularLocation>
        <location evidence="1">Plastid</location>
        <location evidence="1">Chloroplast</location>
    </subcellularLocation>
</comment>
<comment type="similarity">
    <text evidence="1">Belongs to the peroxiredoxin-like PRXL2 family. PRXL2C subfamily.</text>
</comment>
<gene>
    <name type="ordered locus">At2g37240</name>
    <name type="ORF">F3G5.3</name>
</gene>
<proteinExistence type="evidence at protein level"/>
<name>PXL2C_ARATH</name>
<reference key="1">
    <citation type="journal article" date="1999" name="Nature">
        <title>Sequence and analysis of chromosome 2 of the plant Arabidopsis thaliana.</title>
        <authorList>
            <person name="Lin X."/>
            <person name="Kaul S."/>
            <person name="Rounsley S.D."/>
            <person name="Shea T.P."/>
            <person name="Benito M.-I."/>
            <person name="Town C.D."/>
            <person name="Fujii C.Y."/>
            <person name="Mason T.M."/>
            <person name="Bowman C.L."/>
            <person name="Barnstead M.E."/>
            <person name="Feldblyum T.V."/>
            <person name="Buell C.R."/>
            <person name="Ketchum K.A."/>
            <person name="Lee J.J."/>
            <person name="Ronning C.M."/>
            <person name="Koo H.L."/>
            <person name="Moffat K.S."/>
            <person name="Cronin L.A."/>
            <person name="Shen M."/>
            <person name="Pai G."/>
            <person name="Van Aken S."/>
            <person name="Umayam L."/>
            <person name="Tallon L.J."/>
            <person name="Gill J.E."/>
            <person name="Adams M.D."/>
            <person name="Carrera A.J."/>
            <person name="Creasy T.H."/>
            <person name="Goodman H.M."/>
            <person name="Somerville C.R."/>
            <person name="Copenhaver G.P."/>
            <person name="Preuss D."/>
            <person name="Nierman W.C."/>
            <person name="White O."/>
            <person name="Eisen J.A."/>
            <person name="Salzberg S.L."/>
            <person name="Fraser C.M."/>
            <person name="Venter J.C."/>
        </authorList>
    </citation>
    <scope>NUCLEOTIDE SEQUENCE [LARGE SCALE GENOMIC DNA]</scope>
    <source>
        <strain>cv. Columbia</strain>
    </source>
</reference>
<reference key="2">
    <citation type="journal article" date="2017" name="Plant J.">
        <title>Araport11: a complete reannotation of the Arabidopsis thaliana reference genome.</title>
        <authorList>
            <person name="Cheng C.Y."/>
            <person name="Krishnakumar V."/>
            <person name="Chan A.P."/>
            <person name="Thibaud-Nissen F."/>
            <person name="Schobel S."/>
            <person name="Town C.D."/>
        </authorList>
    </citation>
    <scope>GENOME REANNOTATION</scope>
    <source>
        <strain>cv. Columbia</strain>
    </source>
</reference>
<reference key="3">
    <citation type="journal article" date="2003" name="Science">
        <title>Empirical analysis of transcriptional activity in the Arabidopsis genome.</title>
        <authorList>
            <person name="Yamada K."/>
            <person name="Lim J."/>
            <person name="Dale J.M."/>
            <person name="Chen H."/>
            <person name="Shinn P."/>
            <person name="Palm C.J."/>
            <person name="Southwick A.M."/>
            <person name="Wu H.C."/>
            <person name="Kim C.J."/>
            <person name="Nguyen M."/>
            <person name="Pham P.K."/>
            <person name="Cheuk R.F."/>
            <person name="Karlin-Newmann G."/>
            <person name="Liu S.X."/>
            <person name="Lam B."/>
            <person name="Sakano H."/>
            <person name="Wu T."/>
            <person name="Yu G."/>
            <person name="Miranda M."/>
            <person name="Quach H.L."/>
            <person name="Tripp M."/>
            <person name="Chang C.H."/>
            <person name="Lee J.M."/>
            <person name="Toriumi M.J."/>
            <person name="Chan M.M."/>
            <person name="Tang C.C."/>
            <person name="Onodera C.S."/>
            <person name="Deng J.M."/>
            <person name="Akiyama K."/>
            <person name="Ansari Y."/>
            <person name="Arakawa T."/>
            <person name="Banh J."/>
            <person name="Banno F."/>
            <person name="Bowser L."/>
            <person name="Brooks S.Y."/>
            <person name="Carninci P."/>
            <person name="Chao Q."/>
            <person name="Choy N."/>
            <person name="Enju A."/>
            <person name="Goldsmith A.D."/>
            <person name="Gurjal M."/>
            <person name="Hansen N.F."/>
            <person name="Hayashizaki Y."/>
            <person name="Johnson-Hopson C."/>
            <person name="Hsuan V.W."/>
            <person name="Iida K."/>
            <person name="Karnes M."/>
            <person name="Khan S."/>
            <person name="Koesema E."/>
            <person name="Ishida J."/>
            <person name="Jiang P.X."/>
            <person name="Jones T."/>
            <person name="Kawai J."/>
            <person name="Kamiya A."/>
            <person name="Meyers C."/>
            <person name="Nakajima M."/>
            <person name="Narusaka M."/>
            <person name="Seki M."/>
            <person name="Sakurai T."/>
            <person name="Satou M."/>
            <person name="Tamse R."/>
            <person name="Vaysberg M."/>
            <person name="Wallender E.K."/>
            <person name="Wong C."/>
            <person name="Yamamura Y."/>
            <person name="Yuan S."/>
            <person name="Shinozaki K."/>
            <person name="Davis R.W."/>
            <person name="Theologis A."/>
            <person name="Ecker J.R."/>
        </authorList>
    </citation>
    <scope>NUCLEOTIDE SEQUENCE [LARGE SCALE MRNA]</scope>
    <source>
        <strain>cv. Columbia</strain>
    </source>
</reference>
<reference key="4">
    <citation type="submission" date="2002-03" db="EMBL/GenBank/DDBJ databases">
        <title>Full-length cDNA from Arabidopsis thaliana.</title>
        <authorList>
            <person name="Brover V.V."/>
            <person name="Troukhan M.E."/>
            <person name="Alexandrov N.A."/>
            <person name="Lu Y.-P."/>
            <person name="Flavell R.B."/>
            <person name="Feldmann K.A."/>
        </authorList>
    </citation>
    <scope>NUCLEOTIDE SEQUENCE [LARGE SCALE MRNA]</scope>
</reference>
<reference key="5">
    <citation type="journal article" date="2012" name="Mol. Cell. Proteomics">
        <title>Comparative large-scale characterisation of plant vs. mammal proteins reveals similar and idiosyncratic N-alpha acetylation features.</title>
        <authorList>
            <person name="Bienvenut W.V."/>
            <person name="Sumpton D."/>
            <person name="Martinez A."/>
            <person name="Lilla S."/>
            <person name="Espagne C."/>
            <person name="Meinnel T."/>
            <person name="Giglione C."/>
        </authorList>
    </citation>
    <scope>ACETYLATION [LARGE SCALE ANALYSIS] AT ALA-53</scope>
    <scope>CLEAVAGE OF TRANSIT PEPTIDE [LARGE SCALE ANALYSIS] AFTER SER-52</scope>
    <scope>IDENTIFICATION BY MASS SPECTROMETRY [LARGE SCALE ANALYSIS]</scope>
</reference>
<evidence type="ECO:0000305" key="1"/>
<evidence type="ECO:0007744" key="2">
    <source>
    </source>
</evidence>
<protein>
    <recommendedName>
        <fullName>Thioredoxin-like protein AAED1, chloroplastic</fullName>
    </recommendedName>
    <alternativeName>
        <fullName>AhpC/TSA antioxidant enzyme domain-containing protein 1</fullName>
    </alternativeName>
</protein>
<feature type="transit peptide" description="Chloroplast" evidence="2">
    <location>
        <begin position="1"/>
        <end position="52"/>
    </location>
</feature>
<feature type="chain" id="PRO_0000036275" description="Thioredoxin-like protein AAED1, chloroplastic">
    <location>
        <begin position="53"/>
        <end position="248"/>
    </location>
</feature>
<feature type="modified residue" description="N-acetylalanine" evidence="2">
    <location>
        <position position="53"/>
    </location>
</feature>
<organism>
    <name type="scientific">Arabidopsis thaliana</name>
    <name type="common">Mouse-ear cress</name>
    <dbReference type="NCBI Taxonomy" id="3702"/>
    <lineage>
        <taxon>Eukaryota</taxon>
        <taxon>Viridiplantae</taxon>
        <taxon>Streptophyta</taxon>
        <taxon>Embryophyta</taxon>
        <taxon>Tracheophyta</taxon>
        <taxon>Spermatophyta</taxon>
        <taxon>Magnoliopsida</taxon>
        <taxon>eudicotyledons</taxon>
        <taxon>Gunneridae</taxon>
        <taxon>Pentapetalae</taxon>
        <taxon>rosids</taxon>
        <taxon>malvids</taxon>
        <taxon>Brassicales</taxon>
        <taxon>Brassicaceae</taxon>
        <taxon>Camelineae</taxon>
        <taxon>Arabidopsis</taxon>
    </lineage>
</organism>
<dbReference type="EMBL" id="AC005896">
    <property type="protein sequence ID" value="AAC98045.2"/>
    <property type="molecule type" value="Genomic_DNA"/>
</dbReference>
<dbReference type="EMBL" id="CP002685">
    <property type="protein sequence ID" value="AEC09371.1"/>
    <property type="molecule type" value="Genomic_DNA"/>
</dbReference>
<dbReference type="EMBL" id="AY050345">
    <property type="protein sequence ID" value="AAK91362.1"/>
    <property type="molecule type" value="mRNA"/>
</dbReference>
<dbReference type="EMBL" id="BT006337">
    <property type="protein sequence ID" value="AAP21145.1"/>
    <property type="molecule type" value="mRNA"/>
</dbReference>
<dbReference type="EMBL" id="AY088891">
    <property type="protein sequence ID" value="AAM67197.1"/>
    <property type="molecule type" value="mRNA"/>
</dbReference>
<dbReference type="PIR" id="C84790">
    <property type="entry name" value="C84790"/>
</dbReference>
<dbReference type="RefSeq" id="NP_030274.1">
    <property type="nucleotide sequence ID" value="NM_129280.3"/>
</dbReference>
<dbReference type="SMR" id="Q9ZUU2"/>
<dbReference type="FunCoup" id="Q9ZUU2">
    <property type="interactions" value="445"/>
</dbReference>
<dbReference type="STRING" id="3702.Q9ZUU2"/>
<dbReference type="iPTMnet" id="Q9ZUU2"/>
<dbReference type="PaxDb" id="3702-AT2G37240.1"/>
<dbReference type="ProteomicsDB" id="226025"/>
<dbReference type="EnsemblPlants" id="AT2G37240.1">
    <property type="protein sequence ID" value="AT2G37240.1"/>
    <property type="gene ID" value="AT2G37240"/>
</dbReference>
<dbReference type="GeneID" id="818301"/>
<dbReference type="Gramene" id="AT2G37240.1">
    <property type="protein sequence ID" value="AT2G37240.1"/>
    <property type="gene ID" value="AT2G37240"/>
</dbReference>
<dbReference type="KEGG" id="ath:AT2G37240"/>
<dbReference type="Araport" id="AT2G37240"/>
<dbReference type="TAIR" id="AT2G37240"/>
<dbReference type="eggNOG" id="KOG4498">
    <property type="taxonomic scope" value="Eukaryota"/>
</dbReference>
<dbReference type="HOGENOM" id="CLU_075681_0_0_1"/>
<dbReference type="InParanoid" id="Q9ZUU2"/>
<dbReference type="OMA" id="QRPVCND"/>
<dbReference type="OrthoDB" id="40334at2759"/>
<dbReference type="PhylomeDB" id="Q9ZUU2"/>
<dbReference type="PRO" id="PR:Q9ZUU2"/>
<dbReference type="Proteomes" id="UP000006548">
    <property type="component" value="Chromosome 2"/>
</dbReference>
<dbReference type="ExpressionAtlas" id="Q9ZUU2">
    <property type="expression patterns" value="baseline and differential"/>
</dbReference>
<dbReference type="GO" id="GO:0009507">
    <property type="term" value="C:chloroplast"/>
    <property type="evidence" value="ECO:0007005"/>
    <property type="project" value="TAIR"/>
</dbReference>
<dbReference type="CDD" id="cd02970">
    <property type="entry name" value="PRX_like2"/>
    <property type="match status" value="1"/>
</dbReference>
<dbReference type="FunFam" id="3.40.30.10:FF:000225">
    <property type="entry name" value="Thioredoxin-like protein AAED1 chloroplastic"/>
    <property type="match status" value="1"/>
</dbReference>
<dbReference type="Gene3D" id="3.40.30.10">
    <property type="entry name" value="Glutaredoxin"/>
    <property type="match status" value="1"/>
</dbReference>
<dbReference type="InterPro" id="IPR032801">
    <property type="entry name" value="PXL2A/B/C"/>
</dbReference>
<dbReference type="InterPro" id="IPR036249">
    <property type="entry name" value="Thioredoxin-like_sf"/>
</dbReference>
<dbReference type="PANTHER" id="PTHR28630">
    <property type="match status" value="1"/>
</dbReference>
<dbReference type="PANTHER" id="PTHR28630:SF11">
    <property type="entry name" value="THIOREDOXIN-LIKE PROTEIN AAED1, CHLOROPLASTIC"/>
    <property type="match status" value="1"/>
</dbReference>
<dbReference type="Pfam" id="PF13911">
    <property type="entry name" value="AhpC-TSA_2"/>
    <property type="match status" value="1"/>
</dbReference>
<dbReference type="SUPFAM" id="SSF52833">
    <property type="entry name" value="Thioredoxin-like"/>
    <property type="match status" value="1"/>
</dbReference>